<feature type="chain" id="PRO_0000345154" description="Autophagy-related protein 13">
    <location>
        <begin position="1"/>
        <end position="503"/>
    </location>
</feature>
<feature type="region of interest" description="Disordered" evidence="3">
    <location>
        <begin position="300"/>
        <end position="345"/>
    </location>
</feature>
<feature type="region of interest" description="Disordered" evidence="3">
    <location>
        <begin position="392"/>
        <end position="428"/>
    </location>
</feature>
<feature type="compositionally biased region" description="Pro residues" evidence="3">
    <location>
        <begin position="329"/>
        <end position="338"/>
    </location>
</feature>
<feature type="compositionally biased region" description="Pro residues" evidence="3">
    <location>
        <begin position="398"/>
        <end position="407"/>
    </location>
</feature>
<feature type="compositionally biased region" description="Low complexity" evidence="3">
    <location>
        <begin position="408"/>
        <end position="425"/>
    </location>
</feature>
<proteinExistence type="evidence at transcript level"/>
<accession>Q7SYE0</accession>
<organism>
    <name type="scientific">Danio rerio</name>
    <name type="common">Zebrafish</name>
    <name type="synonym">Brachydanio rerio</name>
    <dbReference type="NCBI Taxonomy" id="7955"/>
    <lineage>
        <taxon>Eukaryota</taxon>
        <taxon>Metazoa</taxon>
        <taxon>Chordata</taxon>
        <taxon>Craniata</taxon>
        <taxon>Vertebrata</taxon>
        <taxon>Euteleostomi</taxon>
        <taxon>Actinopterygii</taxon>
        <taxon>Neopterygii</taxon>
        <taxon>Teleostei</taxon>
        <taxon>Ostariophysi</taxon>
        <taxon>Cypriniformes</taxon>
        <taxon>Danionidae</taxon>
        <taxon>Danioninae</taxon>
        <taxon>Danio</taxon>
    </lineage>
</organism>
<reference key="1">
    <citation type="submission" date="2003-07" db="EMBL/GenBank/DDBJ databases">
        <authorList>
            <consortium name="NIH - Zebrafish Gene Collection (ZGC) project"/>
        </authorList>
    </citation>
    <scope>NUCLEOTIDE SEQUENCE [LARGE SCALE MRNA]</scope>
    <source>
        <strain>AB</strain>
    </source>
</reference>
<protein>
    <recommendedName>
        <fullName>Autophagy-related protein 13</fullName>
    </recommendedName>
</protein>
<name>ATG13_DANRE</name>
<keyword id="KW-0072">Autophagy</keyword>
<keyword id="KW-0963">Cytoplasm</keyword>
<keyword id="KW-1185">Reference proteome</keyword>
<gene>
    <name type="primary">atg13</name>
    <name type="ORF">zgc:63526</name>
</gene>
<sequence length="503" mass="54737">MDSDLSPQDKKDLDKFIKFFALKTVQVIVQARLGEKISTCSSSSPTGSDWFNLAIKDIPEVTHEAKKALAGQLPGIGRSMCVEISLKTSEGDSMELETWCLEMNEKCDKDIKVSYTVYNRLSLLLKSLLAITRVTPAYKLSRQQGHDYVILYRIYFGDVQLTGLGEGFQTVRVGIVGTPIGTITLSCAYRTNLALVSSRQFERTGPIMGIIIDHFVERPFTNMAHTHPCSYRAPGEDDGGTYAGIEDSQEVCTTSFSTSPPSQLYSSRLSYQTPPLGTVDLCHPTACTGAAHPHQMVVPGKDGGIPQVPAQPNHGTGAEQGRIPSCPTGQPPQLPPPTSCSSEVKTVSPSDVLETTFTRKVGAFVNKATTQVTTTGLDLPFAAFAPRSYDMEENDPMVHPPPSPIPSSPLQGSLHSNNSSHSGGQPNDDFVMVDFKPAFSKDDLLPMDLGTFYREFQNPPQLASLSIDVSAQSMAEDLDSLPEKLAVYEKNIDEFDAFVDTLQ</sequence>
<comment type="function">
    <text evidence="1">Autophagy factor required for autophagosome formation. Target of the TOR kinase signaling pathway that regulates autophagy through the control of the phosphorylation status of ATG13 and ULK1, and the regulation of the ATG13-ULK1-RB1CC1 complex.</text>
</comment>
<comment type="subcellular location">
    <subcellularLocation>
        <location evidence="2">Cytoplasm</location>
        <location evidence="2">Cytosol</location>
    </subcellularLocation>
    <subcellularLocation>
        <location evidence="2">Preautophagosomal structure</location>
    </subcellularLocation>
    <text evidence="2">Under starvation conditions, is localized to puncate structures primarily representing the isolation membrane that sequesters a portion of the cytoplasm resulting in the formation of an autophagosome.</text>
</comment>
<comment type="PTM">
    <text evidence="1">Phosphorylated under nutrient-rich conditions; dephosphorylated during starvation or following treatment with rapamycin.</text>
</comment>
<comment type="similarity">
    <text evidence="4">Belongs to the ATG13 family. Metazoan subfamily.</text>
</comment>
<dbReference type="EMBL" id="BC054904">
    <property type="protein sequence ID" value="AAH54904.1"/>
    <property type="molecule type" value="mRNA"/>
</dbReference>
<dbReference type="RefSeq" id="NP_956727.1">
    <property type="nucleotide sequence ID" value="NM_200433.2"/>
</dbReference>
<dbReference type="SMR" id="Q7SYE0"/>
<dbReference type="FunCoup" id="Q7SYE0">
    <property type="interactions" value="1272"/>
</dbReference>
<dbReference type="STRING" id="7955.ENSDARP00000052323"/>
<dbReference type="PaxDb" id="7955-ENSDARP00000052323"/>
<dbReference type="Ensembl" id="ENSDART00000052324">
    <property type="protein sequence ID" value="ENSDARP00000052323"/>
    <property type="gene ID" value="ENSDARG00000036040"/>
</dbReference>
<dbReference type="GeneID" id="393405"/>
<dbReference type="KEGG" id="dre:393405"/>
<dbReference type="AGR" id="ZFIN:ZDB-GENE-040426-1149"/>
<dbReference type="CTD" id="9776"/>
<dbReference type="ZFIN" id="ZDB-GENE-040426-1149">
    <property type="gene designation" value="atg13"/>
</dbReference>
<dbReference type="eggNOG" id="KOG3874">
    <property type="taxonomic scope" value="Eukaryota"/>
</dbReference>
<dbReference type="HOGENOM" id="CLU_036365_0_0_1"/>
<dbReference type="InParanoid" id="Q7SYE0"/>
<dbReference type="OMA" id="ETWYISL"/>
<dbReference type="OrthoDB" id="70161at2759"/>
<dbReference type="PhylomeDB" id="Q7SYE0"/>
<dbReference type="TreeFam" id="TF321599"/>
<dbReference type="Reactome" id="R-DRE-1632852">
    <property type="pathway name" value="Macroautophagy"/>
</dbReference>
<dbReference type="PRO" id="PR:Q7SYE0"/>
<dbReference type="Proteomes" id="UP000000437">
    <property type="component" value="Chromosome 7"/>
</dbReference>
<dbReference type="Bgee" id="ENSDARG00000036040">
    <property type="expression patterns" value="Expressed in spleen and 26 other cell types or tissues"/>
</dbReference>
<dbReference type="ExpressionAtlas" id="Q7SYE0">
    <property type="expression patterns" value="baseline and differential"/>
</dbReference>
<dbReference type="GO" id="GO:1990316">
    <property type="term" value="C:Atg1/ULK1 kinase complex"/>
    <property type="evidence" value="ECO:0000318"/>
    <property type="project" value="GO_Central"/>
</dbReference>
<dbReference type="GO" id="GO:0005776">
    <property type="term" value="C:autophagosome"/>
    <property type="evidence" value="ECO:0000318"/>
    <property type="project" value="GO_Central"/>
</dbReference>
<dbReference type="GO" id="GO:0005829">
    <property type="term" value="C:cytosol"/>
    <property type="evidence" value="ECO:0000318"/>
    <property type="project" value="GO_Central"/>
</dbReference>
<dbReference type="GO" id="GO:0000407">
    <property type="term" value="C:phagophore assembly site"/>
    <property type="evidence" value="ECO:0000318"/>
    <property type="project" value="GO_Central"/>
</dbReference>
<dbReference type="GO" id="GO:0019887">
    <property type="term" value="F:protein kinase regulator activity"/>
    <property type="evidence" value="ECO:0000318"/>
    <property type="project" value="GO_Central"/>
</dbReference>
<dbReference type="GO" id="GO:0000423">
    <property type="term" value="P:mitophagy"/>
    <property type="evidence" value="ECO:0000318"/>
    <property type="project" value="GO_Central"/>
</dbReference>
<dbReference type="GO" id="GO:0034727">
    <property type="term" value="P:piecemeal microautophagy of the nucleus"/>
    <property type="evidence" value="ECO:0000318"/>
    <property type="project" value="GO_Central"/>
</dbReference>
<dbReference type="GO" id="GO:1902732">
    <property type="term" value="P:positive regulation of chondrocyte proliferation"/>
    <property type="evidence" value="ECO:0000315"/>
    <property type="project" value="ZFIN"/>
</dbReference>
<dbReference type="GO" id="GO:0034497">
    <property type="term" value="P:protein localization to phagophore assembly site"/>
    <property type="evidence" value="ECO:0000318"/>
    <property type="project" value="GO_Central"/>
</dbReference>
<dbReference type="GO" id="GO:0010506">
    <property type="term" value="P:regulation of autophagy"/>
    <property type="evidence" value="ECO:0000315"/>
    <property type="project" value="ZFIN"/>
</dbReference>
<dbReference type="GO" id="GO:0061181">
    <property type="term" value="P:regulation of chondrocyte development"/>
    <property type="evidence" value="ECO:0000315"/>
    <property type="project" value="ZFIN"/>
</dbReference>
<dbReference type="FunFam" id="3.30.900.10:FF:000001">
    <property type="entry name" value="Autophagy-related protein 13"/>
    <property type="match status" value="1"/>
</dbReference>
<dbReference type="Gene3D" id="3.30.900.10">
    <property type="entry name" value="HORMA domain"/>
    <property type="match status" value="1"/>
</dbReference>
<dbReference type="InterPro" id="IPR040182">
    <property type="entry name" value="ATG13"/>
</dbReference>
<dbReference type="InterPro" id="IPR018731">
    <property type="entry name" value="Atg13_N"/>
</dbReference>
<dbReference type="InterPro" id="IPR036570">
    <property type="entry name" value="HORMA_dom_sf"/>
</dbReference>
<dbReference type="PANTHER" id="PTHR13430">
    <property type="match status" value="1"/>
</dbReference>
<dbReference type="PANTHER" id="PTHR13430:SF4">
    <property type="entry name" value="AUTOPHAGY-RELATED PROTEIN 13"/>
    <property type="match status" value="1"/>
</dbReference>
<dbReference type="Pfam" id="PF10033">
    <property type="entry name" value="ATG13"/>
    <property type="match status" value="1"/>
</dbReference>
<evidence type="ECO:0000250" key="1"/>
<evidence type="ECO:0000250" key="2">
    <source>
        <dbReference type="UniProtKB" id="Q91YI1"/>
    </source>
</evidence>
<evidence type="ECO:0000256" key="3">
    <source>
        <dbReference type="SAM" id="MobiDB-lite"/>
    </source>
</evidence>
<evidence type="ECO:0000305" key="4"/>